<protein>
    <recommendedName>
        <fullName>Phycocyanobilin lyase subunit beta</fullName>
        <ecNumber>4.-.-.-</ecNumber>
    </recommendedName>
    <alternativeName>
        <fullName>Phycocyanin-1 operon protein CpcF</fullName>
    </alternativeName>
</protein>
<proteinExistence type="inferred from homology"/>
<feature type="chain" id="PRO_0000199278" description="Phycocyanobilin lyase subunit beta">
    <location>
        <begin position="1"/>
        <end position="282"/>
    </location>
</feature>
<dbReference type="EC" id="4.-.-.-"/>
<dbReference type="EMBL" id="M99426">
    <property type="protein sequence ID" value="AAA26041.1"/>
    <property type="molecule type" value="Genomic_DNA"/>
</dbReference>
<dbReference type="SMR" id="Q52449"/>
<dbReference type="GO" id="GO:0030089">
    <property type="term" value="C:phycobilisome"/>
    <property type="evidence" value="ECO:0007669"/>
    <property type="project" value="UniProtKB-KW"/>
</dbReference>
<dbReference type="GO" id="GO:0016829">
    <property type="term" value="F:lyase activity"/>
    <property type="evidence" value="ECO:0007669"/>
    <property type="project" value="UniProtKB-KW"/>
</dbReference>
<dbReference type="GO" id="GO:0016491">
    <property type="term" value="F:oxidoreductase activity"/>
    <property type="evidence" value="ECO:0007669"/>
    <property type="project" value="TreeGrafter"/>
</dbReference>
<dbReference type="Gene3D" id="1.25.10.10">
    <property type="entry name" value="Leucine-rich Repeat Variant"/>
    <property type="match status" value="1"/>
</dbReference>
<dbReference type="InterPro" id="IPR011989">
    <property type="entry name" value="ARM-like"/>
</dbReference>
<dbReference type="InterPro" id="IPR016024">
    <property type="entry name" value="ARM-type_fold"/>
</dbReference>
<dbReference type="PANTHER" id="PTHR12697:SF5">
    <property type="entry name" value="DEOXYHYPUSINE HYDROXYLASE"/>
    <property type="match status" value="1"/>
</dbReference>
<dbReference type="PANTHER" id="PTHR12697">
    <property type="entry name" value="PBS LYASE HEAT-LIKE PROTEIN"/>
    <property type="match status" value="1"/>
</dbReference>
<dbReference type="Pfam" id="PF13646">
    <property type="entry name" value="HEAT_2"/>
    <property type="match status" value="1"/>
</dbReference>
<dbReference type="SUPFAM" id="SSF48371">
    <property type="entry name" value="ARM repeat"/>
    <property type="match status" value="1"/>
</dbReference>
<keyword id="KW-0042">Antenna complex</keyword>
<keyword id="KW-0456">Lyase</keyword>
<keyword id="KW-0605">Phycobilisome</keyword>
<name>CPCF_PSETP</name>
<organism>
    <name type="scientific">Pseudanabaena tenuis (strain PCC 7409)</name>
    <dbReference type="NCBI Taxonomy" id="29415"/>
    <lineage>
        <taxon>Bacteria</taxon>
        <taxon>Bacillati</taxon>
        <taxon>Cyanobacteriota</taxon>
        <taxon>Cyanophyceae</taxon>
        <taxon>Pseudanabaenales</taxon>
        <taxon>Pseudanabaenaceae</taxon>
        <taxon>Pseudanabaena</taxon>
    </lineage>
</organism>
<accession>Q52449</accession>
<gene>
    <name type="primary">cpcF1</name>
</gene>
<evidence type="ECO:0000250" key="1"/>
<evidence type="ECO:0000305" key="2"/>
<comment type="function">
    <text evidence="1">Required for the chromophorylation of the CpcA gene product.</text>
</comment>
<comment type="subunit">
    <text evidence="1">CpcE and CpcF associate to form a lyase.</text>
</comment>
<comment type="similarity">
    <text evidence="2">Belongs to the CpcE/RpcE/PecE family.</text>
</comment>
<reference key="1">
    <citation type="submission" date="1992-08" db="EMBL/GenBank/DDBJ databases">
        <title>Organization and transcription of the genes encoding two differentially expressed phycocyanins in the cyanobacterium Pseudanabaena sp. PCC 7409.</title>
        <authorList>
            <person name="Dubbs J.M."/>
            <person name="Bryant D.A."/>
        </authorList>
    </citation>
    <scope>NUCLEOTIDE SEQUENCE [GENOMIC DNA]</scope>
</reference>
<sequence>MTDRLSQLIQAVEEADSSKLLLEAVQNLAAARLEGAIPILIEALSYNNPGAAVASVDGLILLGSAAVPPLLELLDMHNYTARAWAIRALAGIGDPRGLVTLLGVATADFAMSVRRAAVKGLGTMKWHWFPDELREIAQEEALDALLFVAQQDEEWVVRYASVVGLQSLAIAIAEAHPTWLAEIQTQFNLMSCNDEVLAIRGRVCVAQQKLQQKIQQLKSDSFHKSIEIKETEEKKSPLTSNDWQDILNQLYEIKRQERINSGSEGDPRRFQQLAAAITETNN</sequence>